<organism>
    <name type="scientific">Lactobacillus helveticus (strain DPC 4571)</name>
    <dbReference type="NCBI Taxonomy" id="405566"/>
    <lineage>
        <taxon>Bacteria</taxon>
        <taxon>Bacillati</taxon>
        <taxon>Bacillota</taxon>
        <taxon>Bacilli</taxon>
        <taxon>Lactobacillales</taxon>
        <taxon>Lactobacillaceae</taxon>
        <taxon>Lactobacillus</taxon>
    </lineage>
</organism>
<comment type="function">
    <text evidence="1">This protein binds specifically to 23S rRNA; its binding is stimulated by other ribosomal proteins, e.g. L4, L17, and L20. It is important during the early stages of 50S assembly. It makes multiple contacts with different domains of the 23S rRNA in the assembled 50S subunit and ribosome (By similarity).</text>
</comment>
<comment type="function">
    <text evidence="1">The globular domain of the protein is located near the polypeptide exit tunnel on the outside of the subunit, while an extended beta-hairpin is found that lines the wall of the exit tunnel in the center of the 70S ribosome.</text>
</comment>
<comment type="subunit">
    <text evidence="1">Part of the 50S ribosomal subunit.</text>
</comment>
<comment type="similarity">
    <text evidence="1">Belongs to the universal ribosomal protein uL22 family.</text>
</comment>
<reference key="1">
    <citation type="journal article" date="2008" name="J. Bacteriol.">
        <title>Genome sequence of Lactobacillus helveticus: an organism distinguished by selective gene loss and IS element expansion.</title>
        <authorList>
            <person name="Callanan M."/>
            <person name="Kaleta P."/>
            <person name="O'Callaghan J."/>
            <person name="O'Sullivan O."/>
            <person name="Jordan K."/>
            <person name="McAuliffe O."/>
            <person name="Sangrador-Vegas A."/>
            <person name="Slattery L."/>
            <person name="Fitzgerald G.F."/>
            <person name="Beresford T."/>
            <person name="Ross R.P."/>
        </authorList>
    </citation>
    <scope>NUCLEOTIDE SEQUENCE [LARGE SCALE GENOMIC DNA]</scope>
    <source>
        <strain>DPC 4571</strain>
    </source>
</reference>
<dbReference type="EMBL" id="CP000517">
    <property type="protein sequence ID" value="ABX26541.1"/>
    <property type="molecule type" value="Genomic_DNA"/>
</dbReference>
<dbReference type="RefSeq" id="WP_003625788.1">
    <property type="nucleotide sequence ID" value="NC_010080.1"/>
</dbReference>
<dbReference type="SMR" id="A8YXL0"/>
<dbReference type="GeneID" id="83725542"/>
<dbReference type="KEGG" id="lhe:lhv_0317"/>
<dbReference type="eggNOG" id="COG0091">
    <property type="taxonomic scope" value="Bacteria"/>
</dbReference>
<dbReference type="HOGENOM" id="CLU_083987_3_3_9"/>
<dbReference type="Proteomes" id="UP000000790">
    <property type="component" value="Chromosome"/>
</dbReference>
<dbReference type="GO" id="GO:0022625">
    <property type="term" value="C:cytosolic large ribosomal subunit"/>
    <property type="evidence" value="ECO:0007669"/>
    <property type="project" value="TreeGrafter"/>
</dbReference>
<dbReference type="GO" id="GO:0019843">
    <property type="term" value="F:rRNA binding"/>
    <property type="evidence" value="ECO:0007669"/>
    <property type="project" value="UniProtKB-UniRule"/>
</dbReference>
<dbReference type="GO" id="GO:0003735">
    <property type="term" value="F:structural constituent of ribosome"/>
    <property type="evidence" value="ECO:0007669"/>
    <property type="project" value="InterPro"/>
</dbReference>
<dbReference type="GO" id="GO:0006412">
    <property type="term" value="P:translation"/>
    <property type="evidence" value="ECO:0007669"/>
    <property type="project" value="UniProtKB-UniRule"/>
</dbReference>
<dbReference type="CDD" id="cd00336">
    <property type="entry name" value="Ribosomal_L22"/>
    <property type="match status" value="1"/>
</dbReference>
<dbReference type="FunFam" id="3.90.470.10:FF:000001">
    <property type="entry name" value="50S ribosomal protein L22"/>
    <property type="match status" value="1"/>
</dbReference>
<dbReference type="Gene3D" id="3.90.470.10">
    <property type="entry name" value="Ribosomal protein L22/L17"/>
    <property type="match status" value="1"/>
</dbReference>
<dbReference type="HAMAP" id="MF_01331_B">
    <property type="entry name" value="Ribosomal_uL22_B"/>
    <property type="match status" value="1"/>
</dbReference>
<dbReference type="InterPro" id="IPR001063">
    <property type="entry name" value="Ribosomal_uL22"/>
</dbReference>
<dbReference type="InterPro" id="IPR005727">
    <property type="entry name" value="Ribosomal_uL22_bac/chlpt-type"/>
</dbReference>
<dbReference type="InterPro" id="IPR047867">
    <property type="entry name" value="Ribosomal_uL22_bac/org-type"/>
</dbReference>
<dbReference type="InterPro" id="IPR036394">
    <property type="entry name" value="Ribosomal_uL22_sf"/>
</dbReference>
<dbReference type="NCBIfam" id="TIGR01044">
    <property type="entry name" value="rplV_bact"/>
    <property type="match status" value="1"/>
</dbReference>
<dbReference type="PANTHER" id="PTHR13501">
    <property type="entry name" value="CHLOROPLAST 50S RIBOSOMAL PROTEIN L22-RELATED"/>
    <property type="match status" value="1"/>
</dbReference>
<dbReference type="PANTHER" id="PTHR13501:SF8">
    <property type="entry name" value="LARGE RIBOSOMAL SUBUNIT PROTEIN UL22M"/>
    <property type="match status" value="1"/>
</dbReference>
<dbReference type="Pfam" id="PF00237">
    <property type="entry name" value="Ribosomal_L22"/>
    <property type="match status" value="1"/>
</dbReference>
<dbReference type="SUPFAM" id="SSF54843">
    <property type="entry name" value="Ribosomal protein L22"/>
    <property type="match status" value="1"/>
</dbReference>
<proteinExistence type="inferred from homology"/>
<keyword id="KW-0687">Ribonucleoprotein</keyword>
<keyword id="KW-0689">Ribosomal protein</keyword>
<keyword id="KW-0694">RNA-binding</keyword>
<keyword id="KW-0699">rRNA-binding</keyword>
<name>RL22_LACH4</name>
<evidence type="ECO:0000255" key="1">
    <source>
        <dbReference type="HAMAP-Rule" id="MF_01331"/>
    </source>
</evidence>
<evidence type="ECO:0000305" key="2"/>
<feature type="chain" id="PRO_1000073279" description="Large ribosomal subunit protein uL22">
    <location>
        <begin position="1"/>
        <end position="117"/>
    </location>
</feature>
<gene>
    <name evidence="1" type="primary">rplV</name>
    <name type="ordered locus">lhv_0317</name>
</gene>
<protein>
    <recommendedName>
        <fullName evidence="1">Large ribosomal subunit protein uL22</fullName>
    </recommendedName>
    <alternativeName>
        <fullName evidence="2">50S ribosomal protein L22</fullName>
    </alternativeName>
</protein>
<accession>A8YXL0</accession>
<sequence length="117" mass="12800">MAEQISSAKAEARTVRIAPRKARLVVDLIRGKSVAEALAILEFTPRAASPIVEKVLRSAIANAEHNYDLESANLYVSEAYVNEGATLKRFRPRAKGMASPINKRTSHVVVVVSEKND</sequence>